<evidence type="ECO:0000256" key="1">
    <source>
        <dbReference type="SAM" id="MobiDB-lite"/>
    </source>
</evidence>
<evidence type="ECO:0000305" key="2"/>
<protein>
    <recommendedName>
        <fullName>UPF0489 protein C5orf22 homolog</fullName>
    </recommendedName>
</protein>
<dbReference type="EMBL" id="CR761088">
    <property type="protein sequence ID" value="CAJ81638.1"/>
    <property type="molecule type" value="mRNA"/>
</dbReference>
<dbReference type="EMBL" id="BC084484">
    <property type="protein sequence ID" value="AAH84484.1"/>
    <property type="molecule type" value="mRNA"/>
</dbReference>
<dbReference type="SMR" id="Q28H30"/>
<dbReference type="FunCoup" id="Q28H30">
    <property type="interactions" value="2509"/>
</dbReference>
<dbReference type="STRING" id="8364.ENSXETP00000026988"/>
<dbReference type="PaxDb" id="8364-ENSXETP00000012906"/>
<dbReference type="DNASU" id="496505"/>
<dbReference type="KEGG" id="xtr:496505"/>
<dbReference type="CTD" id="102687286"/>
<dbReference type="eggNOG" id="ENOG502QW2U">
    <property type="taxonomic scope" value="Eukaryota"/>
</dbReference>
<dbReference type="InParanoid" id="Q28H30"/>
<dbReference type="OrthoDB" id="418142at2759"/>
<dbReference type="Proteomes" id="UP000008143">
    <property type="component" value="Chromosome 6"/>
</dbReference>
<dbReference type="InterPro" id="IPR024131">
    <property type="entry name" value="UPF0489"/>
</dbReference>
<dbReference type="PANTHER" id="PTHR13225">
    <property type="entry name" value="MISEXPRESSION SUPPRESSOR OF RAS 6"/>
    <property type="match status" value="1"/>
</dbReference>
<dbReference type="PANTHER" id="PTHR13225:SF3">
    <property type="entry name" value="UPF0489 PROTEIN C5ORF22"/>
    <property type="match status" value="1"/>
</dbReference>
<dbReference type="Pfam" id="PF12640">
    <property type="entry name" value="UPF0489"/>
    <property type="match status" value="1"/>
</dbReference>
<organism>
    <name type="scientific">Xenopus tropicalis</name>
    <name type="common">Western clawed frog</name>
    <name type="synonym">Silurana tropicalis</name>
    <dbReference type="NCBI Taxonomy" id="8364"/>
    <lineage>
        <taxon>Eukaryota</taxon>
        <taxon>Metazoa</taxon>
        <taxon>Chordata</taxon>
        <taxon>Craniata</taxon>
        <taxon>Vertebrata</taxon>
        <taxon>Euteleostomi</taxon>
        <taxon>Amphibia</taxon>
        <taxon>Batrachia</taxon>
        <taxon>Anura</taxon>
        <taxon>Pipoidea</taxon>
        <taxon>Pipidae</taxon>
        <taxon>Xenopodinae</taxon>
        <taxon>Xenopus</taxon>
        <taxon>Silurana</taxon>
    </lineage>
</organism>
<name>CE022_XENTR</name>
<gene>
    <name type="ORF">TEgg058p12.1</name>
</gene>
<reference key="1">
    <citation type="submission" date="2006-10" db="EMBL/GenBank/DDBJ databases">
        <authorList>
            <consortium name="Sanger Xenopus tropicalis EST/cDNA project"/>
        </authorList>
    </citation>
    <scope>NUCLEOTIDE SEQUENCE [LARGE SCALE MRNA]</scope>
    <source>
        <tissue>Egg</tissue>
    </source>
</reference>
<reference key="2">
    <citation type="submission" date="2004-10" db="EMBL/GenBank/DDBJ databases">
        <authorList>
            <consortium name="NIH - Xenopus Gene Collection (XGC) project"/>
        </authorList>
    </citation>
    <scope>NUCLEOTIDE SEQUENCE [LARGE SCALE MRNA]</scope>
    <source>
        <tissue>Embryo</tissue>
    </source>
</reference>
<comment type="similarity">
    <text evidence="2">Belongs to the UPF0489 family.</text>
</comment>
<keyword id="KW-1185">Reference proteome</keyword>
<accession>Q28H30</accession>
<accession>Q5XGF6</accession>
<sequence>MSSEQSHRLRKYNNLPVWVVEDHHDVLPFIYRAIGSKHLPVSNISFIHFDSHPDLLIPVNMPADTVFDKESLFSELSIENWIMPVVYAGHFSQVIWIHPCWAQQIKEGRHCFLVGKDKSTTTIRVTSTDDYFLSDGLYVPEEQLESPKSLHLDVILLEPIREQDWEYKEKGETVAKKIKLEESDQVVEGSSSGIQSSTSESSEDGLMKPTYLNASTKTSNETCTLDSNSNLAKNIIQILEKGTVYVLDIDLDFFSVKNPFKEMYTQDEYKILQELYSFKRPSVHSLEEELVDCVENRVHQLEDLEAAFADFCEDDSDETVQRWASNPGMNSLVQLVHSLKSRMEAPDYEMIHQAGLTCDYAELPHHVSTETEIEGLLQSVKNLLTCLPKPTLVTLARSSLDDYCPSEQVDYIQEKVLDVLRSLYGSLDVHLEFSPGSSSA</sequence>
<feature type="chain" id="PRO_0000305007" description="UPF0489 protein C5orf22 homolog">
    <location>
        <begin position="1"/>
        <end position="440"/>
    </location>
</feature>
<feature type="region of interest" description="Disordered" evidence="1">
    <location>
        <begin position="187"/>
        <end position="207"/>
    </location>
</feature>
<feature type="compositionally biased region" description="Low complexity" evidence="1">
    <location>
        <begin position="188"/>
        <end position="200"/>
    </location>
</feature>
<feature type="sequence conflict" description="In Ref. 2; AAH84484." evidence="2" ref="2">
    <original>N</original>
    <variation>S</variation>
    <location>
        <position position="228"/>
    </location>
</feature>
<proteinExistence type="evidence at transcript level"/>